<keyword id="KW-0963">Cytoplasm</keyword>
<keyword id="KW-0206">Cytoskeleton</keyword>
<keyword id="KW-0903">Direct protein sequencing</keyword>
<keyword id="KW-0276">Fatty acid metabolism</keyword>
<keyword id="KW-0413">Isomerase</keyword>
<keyword id="KW-0443">Lipid metabolism</keyword>
<keyword id="KW-0456">Lyase</keyword>
<keyword id="KW-0493">Microtubule</keyword>
<keyword id="KW-0511">Multifunctional enzyme</keyword>
<keyword id="KW-0520">NAD</keyword>
<keyword id="KW-0560">Oxidoreductase</keyword>
<keyword id="KW-0576">Peroxisome</keyword>
<keyword id="KW-1185">Reference proteome</keyword>
<keyword id="KW-0694">RNA-binding</keyword>
<name>MFP_ORYSJ</name>
<dbReference type="EC" id="4.2.1.17"/>
<dbReference type="EC" id="5.1.2.3"/>
<dbReference type="EC" id="5.3.3.8"/>
<dbReference type="EC" id="1.1.1.35"/>
<dbReference type="EMBL" id="AF442962">
    <property type="protein sequence ID" value="AAL35606.1"/>
    <property type="status" value="ALT_FRAME"/>
    <property type="molecule type" value="mRNA"/>
</dbReference>
<dbReference type="EMBL" id="AP004771">
    <property type="protein sequence ID" value="BAD21833.1"/>
    <property type="molecule type" value="Genomic_DNA"/>
</dbReference>
<dbReference type="EMBL" id="AP008208">
    <property type="protein sequence ID" value="BAF08450.1"/>
    <property type="molecule type" value="Genomic_DNA"/>
</dbReference>
<dbReference type="EMBL" id="AP014958">
    <property type="protein sequence ID" value="BAS78079.1"/>
    <property type="molecule type" value="Genomic_DNA"/>
</dbReference>
<dbReference type="EMBL" id="AF220609">
    <property type="protein sequence ID" value="AAQ13901.1"/>
    <property type="status" value="ALT_INIT"/>
    <property type="molecule type" value="mRNA"/>
</dbReference>
<dbReference type="RefSeq" id="XP_015625624.1">
    <property type="nucleotide sequence ID" value="XM_015770138.1"/>
</dbReference>
<dbReference type="SMR" id="Q8W1L6"/>
<dbReference type="FunCoup" id="Q8W1L6">
    <property type="interactions" value="1744"/>
</dbReference>
<dbReference type="STRING" id="39947.Q8W1L6"/>
<dbReference type="PaxDb" id="39947-Q8W1L6"/>
<dbReference type="EnsemblPlants" id="Os02t0274100-01">
    <property type="protein sequence ID" value="Os02t0274100-01"/>
    <property type="gene ID" value="Os02g0274100"/>
</dbReference>
<dbReference type="Gramene" id="Os02t0274100-01">
    <property type="protein sequence ID" value="Os02t0274100-01"/>
    <property type="gene ID" value="Os02g0274100"/>
</dbReference>
<dbReference type="KEGG" id="dosa:Os02g0274100"/>
<dbReference type="eggNOG" id="KOG1683">
    <property type="taxonomic scope" value="Eukaryota"/>
</dbReference>
<dbReference type="HOGENOM" id="CLU_009834_16_3_1"/>
<dbReference type="InParanoid" id="Q8W1L6"/>
<dbReference type="OMA" id="YNGAAMG"/>
<dbReference type="OrthoDB" id="2018133at2759"/>
<dbReference type="PlantReactome" id="R-OSA-1119445">
    <property type="pathway name" value="Beta-alanine biosynthesis II"/>
</dbReference>
<dbReference type="UniPathway" id="UPA00659"/>
<dbReference type="Proteomes" id="UP000000763">
    <property type="component" value="Chromosome 2"/>
</dbReference>
<dbReference type="Proteomes" id="UP000059680">
    <property type="component" value="Chromosome 2"/>
</dbReference>
<dbReference type="ExpressionAtlas" id="Q8W1L6">
    <property type="expression patterns" value="baseline and differential"/>
</dbReference>
<dbReference type="GO" id="GO:0005874">
    <property type="term" value="C:microtubule"/>
    <property type="evidence" value="ECO:0007669"/>
    <property type="project" value="UniProtKB-KW"/>
</dbReference>
<dbReference type="GO" id="GO:0005777">
    <property type="term" value="C:peroxisome"/>
    <property type="evidence" value="ECO:0000318"/>
    <property type="project" value="GO_Central"/>
</dbReference>
<dbReference type="GO" id="GO:0018812">
    <property type="term" value="F:3-hydroxyacyl-CoA dehydratase activity"/>
    <property type="evidence" value="ECO:0000314"/>
    <property type="project" value="UniProtKB"/>
</dbReference>
<dbReference type="GO" id="GO:0003857">
    <property type="term" value="F:3-hydroxyacyl-CoA dehydrogenase activity"/>
    <property type="evidence" value="ECO:0000318"/>
    <property type="project" value="GO_Central"/>
</dbReference>
<dbReference type="GO" id="GO:0008692">
    <property type="term" value="F:3-hydroxybutyryl-CoA epimerase activity"/>
    <property type="evidence" value="ECO:0000250"/>
    <property type="project" value="UniProtKB"/>
</dbReference>
<dbReference type="GO" id="GO:0004165">
    <property type="term" value="F:delta(3)-delta(2)-enoyl-CoA isomerase activity"/>
    <property type="evidence" value="ECO:0000250"/>
    <property type="project" value="UniProtKB"/>
</dbReference>
<dbReference type="GO" id="GO:0004300">
    <property type="term" value="F:enoyl-CoA hydratase activity"/>
    <property type="evidence" value="ECO:0000314"/>
    <property type="project" value="UniProtKB"/>
</dbReference>
<dbReference type="GO" id="GO:0008017">
    <property type="term" value="F:microtubule binding"/>
    <property type="evidence" value="ECO:0000314"/>
    <property type="project" value="UniProtKB"/>
</dbReference>
<dbReference type="GO" id="GO:0003729">
    <property type="term" value="F:mRNA binding"/>
    <property type="evidence" value="ECO:0000314"/>
    <property type="project" value="UniProtKB"/>
</dbReference>
<dbReference type="GO" id="GO:0070403">
    <property type="term" value="F:NAD+ binding"/>
    <property type="evidence" value="ECO:0007669"/>
    <property type="project" value="InterPro"/>
</dbReference>
<dbReference type="GO" id="GO:0006635">
    <property type="term" value="P:fatty acid beta-oxidation"/>
    <property type="evidence" value="ECO:0000314"/>
    <property type="project" value="UniProtKB"/>
</dbReference>
<dbReference type="CDD" id="cd06558">
    <property type="entry name" value="crotonase-like"/>
    <property type="match status" value="1"/>
</dbReference>
<dbReference type="FunFam" id="3.40.50.720:FF:000009">
    <property type="entry name" value="Fatty oxidation complex, alpha subunit"/>
    <property type="match status" value="1"/>
</dbReference>
<dbReference type="FunFam" id="1.10.1040.50:FF:000004">
    <property type="entry name" value="Peroxisomal fatty acid beta-oxidation multifunctional protein"/>
    <property type="match status" value="1"/>
</dbReference>
<dbReference type="FunFam" id="3.90.226.10:FF:000025">
    <property type="entry name" value="Peroxisomal fatty acid beta-oxidation multifunctional protein"/>
    <property type="match status" value="1"/>
</dbReference>
<dbReference type="Gene3D" id="1.10.1040.50">
    <property type="match status" value="1"/>
</dbReference>
<dbReference type="Gene3D" id="3.90.226.10">
    <property type="entry name" value="2-enoyl-CoA Hydratase, Chain A, domain 1"/>
    <property type="match status" value="1"/>
</dbReference>
<dbReference type="Gene3D" id="3.40.50.720">
    <property type="entry name" value="NAD(P)-binding Rossmann-like Domain"/>
    <property type="match status" value="1"/>
</dbReference>
<dbReference type="InterPro" id="IPR006180">
    <property type="entry name" value="3-OHacyl-CoA_DH_CS"/>
</dbReference>
<dbReference type="InterPro" id="IPR006176">
    <property type="entry name" value="3-OHacyl-CoA_DH_NAD-bd"/>
</dbReference>
<dbReference type="InterPro" id="IPR006108">
    <property type="entry name" value="3HC_DH_C"/>
</dbReference>
<dbReference type="InterPro" id="IPR008927">
    <property type="entry name" value="6-PGluconate_DH-like_C_sf"/>
</dbReference>
<dbReference type="InterPro" id="IPR029045">
    <property type="entry name" value="ClpP/crotonase-like_dom_sf"/>
</dbReference>
<dbReference type="InterPro" id="IPR018376">
    <property type="entry name" value="Enoyl-CoA_hyd/isom_CS"/>
</dbReference>
<dbReference type="InterPro" id="IPR001753">
    <property type="entry name" value="Enoyl-CoA_hydra/iso"/>
</dbReference>
<dbReference type="InterPro" id="IPR036291">
    <property type="entry name" value="NAD(P)-bd_dom_sf"/>
</dbReference>
<dbReference type="PANTHER" id="PTHR23309">
    <property type="entry name" value="3-HYDROXYACYL-COA DEHYROGENASE"/>
    <property type="match status" value="1"/>
</dbReference>
<dbReference type="PANTHER" id="PTHR23309:SF49">
    <property type="entry name" value="PEROXISOMAL BIFUNCTIONAL ENZYME"/>
    <property type="match status" value="1"/>
</dbReference>
<dbReference type="Pfam" id="PF00725">
    <property type="entry name" value="3HCDH"/>
    <property type="match status" value="1"/>
</dbReference>
<dbReference type="Pfam" id="PF02737">
    <property type="entry name" value="3HCDH_N"/>
    <property type="match status" value="1"/>
</dbReference>
<dbReference type="Pfam" id="PF00378">
    <property type="entry name" value="ECH_1"/>
    <property type="match status" value="1"/>
</dbReference>
<dbReference type="SUPFAM" id="SSF48179">
    <property type="entry name" value="6-phosphogluconate dehydrogenase C-terminal domain-like"/>
    <property type="match status" value="2"/>
</dbReference>
<dbReference type="SUPFAM" id="SSF52096">
    <property type="entry name" value="ClpP/crotonase"/>
    <property type="match status" value="1"/>
</dbReference>
<dbReference type="SUPFAM" id="SSF51735">
    <property type="entry name" value="NAD(P)-binding Rossmann-fold domains"/>
    <property type="match status" value="1"/>
</dbReference>
<dbReference type="PROSITE" id="PS00067">
    <property type="entry name" value="3HCDH"/>
    <property type="match status" value="1"/>
</dbReference>
<dbReference type="PROSITE" id="PS00166">
    <property type="entry name" value="ENOYL_COA_HYDRATASE"/>
    <property type="match status" value="1"/>
</dbReference>
<reference evidence="4" key="1">
    <citation type="journal article" date="2002" name="J. Biol. Chem.">
        <title>Identification of a rice RNA- and microtubule-binding protein as the multifunctional protein, a peroxisomal enzyme involved in the beta-oxidation of fatty acids.</title>
        <authorList>
            <person name="Chuong S.D.X."/>
            <person name="Mullen R.T."/>
            <person name="Muench D.G."/>
        </authorList>
    </citation>
    <scope>NUCLEOTIDE SEQUENCE [MRNA]</scope>
    <scope>PARTIAL PROTEIN SEQUENCE</scope>
    <scope>RNA-BINDING</scope>
    <scope>MICROTUBULE-BINDING</scope>
    <scope>CATALYTIC ACTIVITY</scope>
    <source>
        <tissue evidence="2">Seed</tissue>
    </source>
</reference>
<reference key="2">
    <citation type="journal article" date="2005" name="Nature">
        <title>The map-based sequence of the rice genome.</title>
        <authorList>
            <consortium name="International rice genome sequencing project (IRGSP)"/>
        </authorList>
    </citation>
    <scope>NUCLEOTIDE SEQUENCE [LARGE SCALE GENOMIC DNA]</scope>
    <source>
        <strain>cv. Nipponbare</strain>
    </source>
</reference>
<reference key="3">
    <citation type="journal article" date="2008" name="Nucleic Acids Res.">
        <title>The rice annotation project database (RAP-DB): 2008 update.</title>
        <authorList>
            <consortium name="The rice annotation project (RAP)"/>
        </authorList>
    </citation>
    <scope>GENOME REANNOTATION</scope>
    <source>
        <strain>cv. Nipponbare</strain>
    </source>
</reference>
<reference key="4">
    <citation type="journal article" date="2013" name="Rice">
        <title>Improvement of the Oryza sativa Nipponbare reference genome using next generation sequence and optical map data.</title>
        <authorList>
            <person name="Kawahara Y."/>
            <person name="de la Bastide M."/>
            <person name="Hamilton J.P."/>
            <person name="Kanamori H."/>
            <person name="McCombie W.R."/>
            <person name="Ouyang S."/>
            <person name="Schwartz D.C."/>
            <person name="Tanaka T."/>
            <person name="Wu J."/>
            <person name="Zhou S."/>
            <person name="Childs K.L."/>
            <person name="Davidson R.M."/>
            <person name="Lin H."/>
            <person name="Quesada-Ocampo L."/>
            <person name="Vaillancourt B."/>
            <person name="Sakai H."/>
            <person name="Lee S.S."/>
            <person name="Kim J."/>
            <person name="Numa H."/>
            <person name="Itoh T."/>
            <person name="Buell C.R."/>
            <person name="Matsumoto T."/>
        </authorList>
    </citation>
    <scope>GENOME REANNOTATION</scope>
    <source>
        <strain>cv. Nipponbare</strain>
    </source>
</reference>
<reference key="5">
    <citation type="submission" date="2000-01" db="EMBL/GenBank/DDBJ databases">
        <title>Isolation and characterization of a multi-functional protein (OsMFP) gene from rice.</title>
        <authorList>
            <person name="Gaur R."/>
            <person name="Tyagi A.K."/>
        </authorList>
    </citation>
    <scope>NUCLEOTIDE SEQUENCE [MRNA] OF 7-726</scope>
</reference>
<comment type="function">
    <text evidence="2 3">Multifunctional enzyme involved in fatty acid beta-oxidation. Also binds to RNA and microtubules. Possible role in subcellular mRNA localization and RNA-cytoskeleton interactions.</text>
</comment>
<comment type="catalytic activity">
    <reaction evidence="2">
        <text>a (3S)-3-hydroxyacyl-CoA = a (2E)-enoyl-CoA + H2O</text>
        <dbReference type="Rhea" id="RHEA:16105"/>
        <dbReference type="ChEBI" id="CHEBI:15377"/>
        <dbReference type="ChEBI" id="CHEBI:57318"/>
        <dbReference type="ChEBI" id="CHEBI:58856"/>
        <dbReference type="EC" id="4.2.1.17"/>
    </reaction>
</comment>
<comment type="catalytic activity">
    <reaction evidence="2">
        <text>a 4-saturated-(3S)-3-hydroxyacyl-CoA = a (3E)-enoyl-CoA + H2O</text>
        <dbReference type="Rhea" id="RHEA:20724"/>
        <dbReference type="ChEBI" id="CHEBI:15377"/>
        <dbReference type="ChEBI" id="CHEBI:58521"/>
        <dbReference type="ChEBI" id="CHEBI:137480"/>
        <dbReference type="EC" id="4.2.1.17"/>
    </reaction>
</comment>
<comment type="catalytic activity">
    <reaction evidence="2">
        <text>a (3Z)-enoyl-CoA = a 4-saturated (2E)-enoyl-CoA</text>
        <dbReference type="Rhea" id="RHEA:45900"/>
        <dbReference type="ChEBI" id="CHEBI:85097"/>
        <dbReference type="ChEBI" id="CHEBI:85489"/>
        <dbReference type="EC" id="5.3.3.8"/>
    </reaction>
</comment>
<comment type="catalytic activity">
    <reaction evidence="2">
        <text>a (3E)-enoyl-CoA = a 4-saturated (2E)-enoyl-CoA</text>
        <dbReference type="Rhea" id="RHEA:45228"/>
        <dbReference type="ChEBI" id="CHEBI:58521"/>
        <dbReference type="ChEBI" id="CHEBI:85097"/>
        <dbReference type="EC" id="5.3.3.8"/>
    </reaction>
</comment>
<comment type="catalytic activity">
    <reaction evidence="1 2">
        <text>(3S)-3-hydroxybutanoyl-CoA = (3R)-3-hydroxybutanoyl-CoA</text>
        <dbReference type="Rhea" id="RHEA:21760"/>
        <dbReference type="ChEBI" id="CHEBI:57315"/>
        <dbReference type="ChEBI" id="CHEBI:57316"/>
        <dbReference type="EC" id="5.1.2.3"/>
    </reaction>
</comment>
<comment type="catalytic activity">
    <reaction evidence="2">
        <text>a (3S)-3-hydroxyacyl-CoA + NAD(+) = a 3-oxoacyl-CoA + NADH + H(+)</text>
        <dbReference type="Rhea" id="RHEA:22432"/>
        <dbReference type="ChEBI" id="CHEBI:15378"/>
        <dbReference type="ChEBI" id="CHEBI:57318"/>
        <dbReference type="ChEBI" id="CHEBI:57540"/>
        <dbReference type="ChEBI" id="CHEBI:57945"/>
        <dbReference type="ChEBI" id="CHEBI:90726"/>
        <dbReference type="EC" id="1.1.1.35"/>
    </reaction>
</comment>
<comment type="pathway">
    <text>Lipid metabolism; fatty acid beta-oxidation.</text>
</comment>
<comment type="subunit">
    <text evidence="3 4">Monomer.</text>
</comment>
<comment type="subcellular location">
    <subcellularLocation>
        <location evidence="4">Peroxisome</location>
    </subcellularLocation>
    <subcellularLocation>
        <location evidence="4">Cytoplasm</location>
        <location evidence="4">Cytoskeleton</location>
    </subcellularLocation>
</comment>
<comment type="domain">
    <text evidence="1">The epimerase and isomerase activities are contained in the N-terminal region while the dehydrogenase activity is in the C-terminal region.</text>
</comment>
<comment type="similarity">
    <text evidence="4">In the N-terminal section; belongs to the enoyl-CoA hydratase/isomerase family.</text>
</comment>
<comment type="similarity">
    <text evidence="4">In the central section; belongs to the 3-hydroxyacyl-CoA dehydrogenase family.</text>
</comment>
<comment type="sequence caution" evidence="4">
    <conflict type="frameshift">
        <sequence resource="EMBL-CDS" id="AAL35606"/>
    </conflict>
</comment>
<comment type="sequence caution" evidence="4">
    <conflict type="erroneous initiation">
        <sequence resource="EMBL-CDS" id="AAQ13901"/>
    </conflict>
</comment>
<proteinExistence type="evidence at protein level"/>
<feature type="chain" id="PRO_0000109252" description="Peroxisomal fatty acid beta-oxidation multifunctional protein">
    <location>
        <begin position="1"/>
        <end position="726"/>
    </location>
</feature>
<feature type="sequence conflict" description="In Ref. 5; AAQ13901." evidence="4" ref="5">
    <original>G</original>
    <variation>R</variation>
    <location>
        <position position="178"/>
    </location>
</feature>
<feature type="sequence conflict" description="In Ref. 1; AAL35606." evidence="4" ref="1">
    <original>L</original>
    <variation>R</variation>
    <location>
        <position position="345"/>
    </location>
</feature>
<feature type="sequence conflict" description="In Ref. 1; AAL35606." evidence="4" ref="1">
    <original>S</original>
    <variation>C</variation>
    <location>
        <position position="384"/>
    </location>
</feature>
<gene>
    <name type="primary">MFP</name>
    <name type="ordered locus">Os02g0274100</name>
    <name type="ordered locus">LOC_Os02g17390</name>
    <name type="ORF">P0413A11.18</name>
</gene>
<protein>
    <recommendedName>
        <fullName>Peroxisomal fatty acid beta-oxidation multifunctional protein</fullName>
        <shortName>MFP</shortName>
    </recommendedName>
    <domain>
        <recommendedName>
            <fullName>Enoyl-CoA hydratase/3-2-trans-enoyl-CoA isomerase/3-hydroxybutyryl-CoA epimerase</fullName>
            <ecNumber>4.2.1.17</ecNumber>
            <ecNumber>5.1.2.3</ecNumber>
            <ecNumber>5.3.3.8</ecNumber>
        </recommendedName>
    </domain>
    <domain>
        <recommendedName>
            <fullName>3-hydroxyacyl-CoA dehydrogenase</fullName>
            <ecNumber>1.1.1.35</ecNumber>
        </recommendedName>
    </domain>
</protein>
<accession>Q8W1L6</accession>
<accession>Q0E238</accession>
<accession>Q336K1</accession>
<accession>Q6K7T9</accession>
<sequence length="726" mass="78461">MAGAIRVTMEVGADGVAVVTICNPPVNALHPIIIQGLKEKYAEAMDRDDVKAIVLTGAGGKFCGGFDINVFTEVHKTGNVSLMPDVSVELVSNLMEAGKKPSVAAIQGLALGGGLELTMGCHARISTPEAQLGLPELTLGIIPGFGGTQRLPRLVGLPKAIEMMLQSKFITAKEGKEGGLVDALCSPDELIKMSRLWALEIANYRKPWIRSLARTDRLGSLSEARSVLNSARQQAKKVAANLPQHQACLDVMEEGVLCGGHAGVLKEAKVFKELVLSPTSKALVHAFFAQRLTTKVPGVTDVQLKPRKIRKVAVIGGGLMGSGIATALLVSNTSVVLKEVNPQFLQRGQKMIAANLEGLVKRGSLTKDKMNKAMSLLKGALDYSDFKDVDMVIEAVIEKIPLKQSIFSDLEKVCPPHCILATNTSTIDLNVVGEKTNSQDRIIGAHFFSPAHIMPLLEIVRTEKTSPQAILDLITVGKMIKKVPVVVGNCTGFAVNRTFFPYTQGSHLLVSIGIDVFRIDRVISSFGMPMGPFQLQDLAGYGVALAVKDIYAAAFGTRNLDSNLVDLMVQNGRQGKSNGKGYYLYEKGGKPKPDPSVQVVIDEYRRCAKTMPGGKPVTLSDQDILEMIFFPVVNEACRVMDENVVIRASDLDIASILGMGFPKFRGGLVFWADTIGAPYIHSKLSKWTEIYGDFFKPSSYLEDRAKRSLPLSAPNATQQASSRSRM</sequence>
<evidence type="ECO:0000250" key="1">
    <source>
        <dbReference type="UniProtKB" id="Q39659"/>
    </source>
</evidence>
<evidence type="ECO:0000269" key="2">
    <source>
    </source>
</evidence>
<evidence type="ECO:0000303" key="3">
    <source>
    </source>
</evidence>
<evidence type="ECO:0000305" key="4"/>
<organism>
    <name type="scientific">Oryza sativa subsp. japonica</name>
    <name type="common">Rice</name>
    <dbReference type="NCBI Taxonomy" id="39947"/>
    <lineage>
        <taxon>Eukaryota</taxon>
        <taxon>Viridiplantae</taxon>
        <taxon>Streptophyta</taxon>
        <taxon>Embryophyta</taxon>
        <taxon>Tracheophyta</taxon>
        <taxon>Spermatophyta</taxon>
        <taxon>Magnoliopsida</taxon>
        <taxon>Liliopsida</taxon>
        <taxon>Poales</taxon>
        <taxon>Poaceae</taxon>
        <taxon>BOP clade</taxon>
        <taxon>Oryzoideae</taxon>
        <taxon>Oryzeae</taxon>
        <taxon>Oryzinae</taxon>
        <taxon>Oryza</taxon>
        <taxon>Oryza sativa</taxon>
    </lineage>
</organism>